<comment type="function">
    <text evidence="1">Component of the dark-operative protochlorophyllide reductase (DPOR) that uses Mg-ATP and reduced ferredoxin to reduce ring D of protochlorophyllide (Pchlide) to form chlorophyllide a (Chlide). This reaction is light-independent. The L component serves as a unique electron donor to the NB-component of the complex, and binds Mg-ATP.</text>
</comment>
<comment type="catalytic activity">
    <reaction evidence="1">
        <text>chlorophyllide a + oxidized 2[4Fe-4S]-[ferredoxin] + 2 ADP + 2 phosphate = protochlorophyllide a + reduced 2[4Fe-4S]-[ferredoxin] + 2 ATP + 2 H2O</text>
        <dbReference type="Rhea" id="RHEA:28202"/>
        <dbReference type="Rhea" id="RHEA-COMP:10002"/>
        <dbReference type="Rhea" id="RHEA-COMP:10004"/>
        <dbReference type="ChEBI" id="CHEBI:15377"/>
        <dbReference type="ChEBI" id="CHEBI:30616"/>
        <dbReference type="ChEBI" id="CHEBI:33722"/>
        <dbReference type="ChEBI" id="CHEBI:33723"/>
        <dbReference type="ChEBI" id="CHEBI:43474"/>
        <dbReference type="ChEBI" id="CHEBI:83348"/>
        <dbReference type="ChEBI" id="CHEBI:83350"/>
        <dbReference type="ChEBI" id="CHEBI:456216"/>
        <dbReference type="EC" id="1.3.7.7"/>
    </reaction>
</comment>
<comment type="cofactor">
    <cofactor evidence="1">
        <name>[4Fe-4S] cluster</name>
        <dbReference type="ChEBI" id="CHEBI:49883"/>
    </cofactor>
    <text evidence="1">Binds 1 [4Fe-4S] cluster per dimer.</text>
</comment>
<comment type="pathway">
    <text evidence="1">Porphyrin-containing compound metabolism; chlorophyll biosynthesis (light-independent).</text>
</comment>
<comment type="subunit">
    <text evidence="1">Homodimer. Protochlorophyllide reductase is composed of three subunits; ChlL, ChlN and ChlB.</text>
</comment>
<comment type="similarity">
    <text evidence="1">Belongs to the NifH/BchL/ChlL family.</text>
</comment>
<protein>
    <recommendedName>
        <fullName evidence="1">Light-independent protochlorophyllide reductase iron-sulfur ATP-binding protein</fullName>
        <shortName evidence="1">DPOR subunit L</shortName>
        <shortName evidence="1">LI-POR subunit L</shortName>
        <ecNumber evidence="1">1.3.7.7</ecNumber>
    </recommendedName>
</protein>
<accession>Q46GN6</accession>
<reference key="1">
    <citation type="journal article" date="2007" name="PLoS Genet.">
        <title>Patterns and implications of gene gain and loss in the evolution of Prochlorococcus.</title>
        <authorList>
            <person name="Kettler G.C."/>
            <person name="Martiny A.C."/>
            <person name="Huang K."/>
            <person name="Zucker J."/>
            <person name="Coleman M.L."/>
            <person name="Rodrigue S."/>
            <person name="Chen F."/>
            <person name="Lapidus A."/>
            <person name="Ferriera S."/>
            <person name="Johnson J."/>
            <person name="Steglich C."/>
            <person name="Church G.M."/>
            <person name="Richardson P."/>
            <person name="Chisholm S.W."/>
        </authorList>
    </citation>
    <scope>NUCLEOTIDE SEQUENCE [LARGE SCALE GENOMIC DNA]</scope>
    <source>
        <strain>NATL2A</strain>
    </source>
</reference>
<proteinExistence type="inferred from homology"/>
<organism>
    <name type="scientific">Prochlorococcus marinus (strain NATL2A)</name>
    <dbReference type="NCBI Taxonomy" id="59920"/>
    <lineage>
        <taxon>Bacteria</taxon>
        <taxon>Bacillati</taxon>
        <taxon>Cyanobacteriota</taxon>
        <taxon>Cyanophyceae</taxon>
        <taxon>Synechococcales</taxon>
        <taxon>Prochlorococcaceae</taxon>
        <taxon>Prochlorococcus</taxon>
    </lineage>
</organism>
<evidence type="ECO:0000255" key="1">
    <source>
        <dbReference type="HAMAP-Rule" id="MF_00355"/>
    </source>
</evidence>
<evidence type="ECO:0000256" key="2">
    <source>
        <dbReference type="SAM" id="MobiDB-lite"/>
    </source>
</evidence>
<sequence length="296" mass="32464">MTSTITRKEDGEGSVQVKQDPKAQIQEGALVIAVYGKGGIGKSTTSSNLSAAFSKLGKKVLQIGCDPKHDSTFTLTHKMVPTVIDILEEVDFHSEELRPEDFMFKGFNGVMCVESGGPPAGTGCGGYVTGQTVKLLKEHHLLEDTDVVIFDVLGDVVCGGFAAPLQHANYCLIVTANDFDSIFAMNRIVAAINAKAKNYKVRLGGVIANRSAELDQIEKFNERTGLKTMAHFRNVDAIRRSRLKKCTIFEMDSEEEGVVEVQNEYLSLAQKMIDNVEPLEAEPLKDREIFDLLGFD</sequence>
<keyword id="KW-0004">4Fe-4S</keyword>
<keyword id="KW-0067">ATP-binding</keyword>
<keyword id="KW-0149">Chlorophyll biosynthesis</keyword>
<keyword id="KW-0408">Iron</keyword>
<keyword id="KW-0411">Iron-sulfur</keyword>
<keyword id="KW-0460">Magnesium</keyword>
<keyword id="KW-0479">Metal-binding</keyword>
<keyword id="KW-0547">Nucleotide-binding</keyword>
<keyword id="KW-0560">Oxidoreductase</keyword>
<keyword id="KW-0602">Photosynthesis</keyword>
<keyword id="KW-1185">Reference proteome</keyword>
<dbReference type="EC" id="1.3.7.7" evidence="1"/>
<dbReference type="EMBL" id="CP000095">
    <property type="protein sequence ID" value="AAZ59360.1"/>
    <property type="molecule type" value="Genomic_DNA"/>
</dbReference>
<dbReference type="SMR" id="Q46GN6"/>
<dbReference type="STRING" id="59920.PMN2A_1872"/>
<dbReference type="KEGG" id="pmn:PMN2A_1872"/>
<dbReference type="HOGENOM" id="CLU_059373_2_0_3"/>
<dbReference type="OrthoDB" id="9778641at2"/>
<dbReference type="PhylomeDB" id="Q46GN6"/>
<dbReference type="UniPathway" id="UPA00670"/>
<dbReference type="Proteomes" id="UP000002535">
    <property type="component" value="Chromosome"/>
</dbReference>
<dbReference type="GO" id="GO:0051539">
    <property type="term" value="F:4 iron, 4 sulfur cluster binding"/>
    <property type="evidence" value="ECO:0007669"/>
    <property type="project" value="UniProtKB-UniRule"/>
</dbReference>
<dbReference type="GO" id="GO:0005524">
    <property type="term" value="F:ATP binding"/>
    <property type="evidence" value="ECO:0007669"/>
    <property type="project" value="UniProtKB-UniRule"/>
</dbReference>
<dbReference type="GO" id="GO:0046872">
    <property type="term" value="F:metal ion binding"/>
    <property type="evidence" value="ECO:0007669"/>
    <property type="project" value="UniProtKB-KW"/>
</dbReference>
<dbReference type="GO" id="GO:0016730">
    <property type="term" value="F:oxidoreductase activity, acting on iron-sulfur proteins as donors"/>
    <property type="evidence" value="ECO:0007669"/>
    <property type="project" value="InterPro"/>
</dbReference>
<dbReference type="GO" id="GO:0016636">
    <property type="term" value="F:oxidoreductase activity, acting on the CH-CH group of donors, iron-sulfur protein as acceptor"/>
    <property type="evidence" value="ECO:0007669"/>
    <property type="project" value="UniProtKB-UniRule"/>
</dbReference>
<dbReference type="GO" id="GO:0036068">
    <property type="term" value="P:light-independent chlorophyll biosynthetic process"/>
    <property type="evidence" value="ECO:0007669"/>
    <property type="project" value="UniProtKB-UniRule"/>
</dbReference>
<dbReference type="GO" id="GO:0019685">
    <property type="term" value="P:photosynthesis, dark reaction"/>
    <property type="evidence" value="ECO:0007669"/>
    <property type="project" value="InterPro"/>
</dbReference>
<dbReference type="CDD" id="cd02032">
    <property type="entry name" value="Bchl-like"/>
    <property type="match status" value="1"/>
</dbReference>
<dbReference type="Gene3D" id="3.40.50.300">
    <property type="entry name" value="P-loop containing nucleotide triphosphate hydrolases"/>
    <property type="match status" value="1"/>
</dbReference>
<dbReference type="HAMAP" id="MF_00355">
    <property type="entry name" value="ChlL_BchL"/>
    <property type="match status" value="1"/>
</dbReference>
<dbReference type="InterPro" id="IPR030655">
    <property type="entry name" value="NifH/chlL_CS"/>
</dbReference>
<dbReference type="InterPro" id="IPR000392">
    <property type="entry name" value="NifH/frxC"/>
</dbReference>
<dbReference type="InterPro" id="IPR027417">
    <property type="entry name" value="P-loop_NTPase"/>
</dbReference>
<dbReference type="InterPro" id="IPR005971">
    <property type="entry name" value="Protochlorophyllide_ATP-bd"/>
</dbReference>
<dbReference type="NCBIfam" id="TIGR01281">
    <property type="entry name" value="DPOR_bchL"/>
    <property type="match status" value="1"/>
</dbReference>
<dbReference type="PANTHER" id="PTHR42864">
    <property type="entry name" value="LIGHT-INDEPENDENT PROTOCHLOROPHYLLIDE REDUCTASE IRON-SULFUR ATP-BINDING PROTEIN"/>
    <property type="match status" value="1"/>
</dbReference>
<dbReference type="PANTHER" id="PTHR42864:SF2">
    <property type="entry name" value="LIGHT-INDEPENDENT PROTOCHLOROPHYLLIDE REDUCTASE IRON-SULFUR ATP-BINDING PROTEIN"/>
    <property type="match status" value="1"/>
</dbReference>
<dbReference type="Pfam" id="PF00142">
    <property type="entry name" value="Fer4_NifH"/>
    <property type="match status" value="1"/>
</dbReference>
<dbReference type="PIRSF" id="PIRSF000363">
    <property type="entry name" value="Nitrogenase_iron"/>
    <property type="match status" value="1"/>
</dbReference>
<dbReference type="PRINTS" id="PR00091">
    <property type="entry name" value="NITROGNASEII"/>
</dbReference>
<dbReference type="SUPFAM" id="SSF52540">
    <property type="entry name" value="P-loop containing nucleoside triphosphate hydrolases"/>
    <property type="match status" value="1"/>
</dbReference>
<dbReference type="PROSITE" id="PS00746">
    <property type="entry name" value="NIFH_FRXC_1"/>
    <property type="match status" value="1"/>
</dbReference>
<dbReference type="PROSITE" id="PS00692">
    <property type="entry name" value="NIFH_FRXC_2"/>
    <property type="match status" value="1"/>
</dbReference>
<dbReference type="PROSITE" id="PS51026">
    <property type="entry name" value="NIFH_FRXC_3"/>
    <property type="match status" value="1"/>
</dbReference>
<name>CHLL_PROMT</name>
<gene>
    <name evidence="1" type="primary">chlL</name>
    <name type="ordered locus">PMN2A_1872</name>
</gene>
<feature type="chain" id="PRO_0000324066" description="Light-independent protochlorophyllide reductase iron-sulfur ATP-binding protein">
    <location>
        <begin position="1"/>
        <end position="296"/>
    </location>
</feature>
<feature type="region of interest" description="Disordered" evidence="2">
    <location>
        <begin position="1"/>
        <end position="20"/>
    </location>
</feature>
<feature type="compositionally biased region" description="Basic and acidic residues" evidence="2">
    <location>
        <begin position="1"/>
        <end position="11"/>
    </location>
</feature>
<feature type="binding site" evidence="1">
    <location>
        <begin position="39"/>
        <end position="44"/>
    </location>
    <ligand>
        <name>ATP</name>
        <dbReference type="ChEBI" id="CHEBI:30616"/>
    </ligand>
</feature>
<feature type="binding site" evidence="1">
    <location>
        <position position="43"/>
    </location>
    <ligand>
        <name>Mg(2+)</name>
        <dbReference type="ChEBI" id="CHEBI:18420"/>
    </ligand>
</feature>
<feature type="binding site" evidence="1">
    <location>
        <position position="68"/>
    </location>
    <ligand>
        <name>ATP</name>
        <dbReference type="ChEBI" id="CHEBI:30616"/>
    </ligand>
</feature>
<feature type="binding site" evidence="1">
    <location>
        <position position="124"/>
    </location>
    <ligand>
        <name>[4Fe-4S] cluster</name>
        <dbReference type="ChEBI" id="CHEBI:49883"/>
        <note>ligand shared between dimeric partners</note>
    </ligand>
</feature>
<feature type="binding site" evidence="1">
    <location>
        <position position="158"/>
    </location>
    <ligand>
        <name>[4Fe-4S] cluster</name>
        <dbReference type="ChEBI" id="CHEBI:49883"/>
        <note>ligand shared between dimeric partners</note>
    </ligand>
</feature>
<feature type="binding site" evidence="1">
    <location>
        <begin position="209"/>
        <end position="210"/>
    </location>
    <ligand>
        <name>ATP</name>
        <dbReference type="ChEBI" id="CHEBI:30616"/>
    </ligand>
</feature>